<accession>P51468</accession>
<name>ARR3_ONCMY</name>
<sequence>MGDKAGTRVFKKSSPNCKVTVYLGKRDFVDHLDQVDPVDGVILVDPEYLKDRKVFVTLTCAFRYGREDLDVLGLSFRKDLYISTFQAFPPIAEERKANSRLQERLLKKLGQQAHPFYFTIPQNLPCSVTLQPGPEDTGKACGVDFEIRAFCAKSIEEKIHKRNSVRLVIRKVQYAPEKPGPQPMVETTRSFLMSDRSLHLEASLDKELYYHGEPISVNVHVTNNSTKTVKRLKISVRQYADICLFSTAQYKCPVAQVEADDQVSSSSTFCKVYTLTPTLDKNREKRGLALDGKLKHEDTNLASSTIVKDVTNKEVLGILVSYRVKVKLVISRGGLLSGVLERDVSVELPFVLMHPKPTELPISRPQSAVPDSDPPIDTNLIEFETNSFSQDDDFVFEDFARLRLKGMADDKDDDC</sequence>
<feature type="chain" id="PRO_0000205213" description="Arrestin red cell isoform 3">
    <location>
        <begin position="1"/>
        <end position="415"/>
    </location>
</feature>
<comment type="subcellular location">
    <subcellularLocation>
        <location evidence="1">Cytoplasm</location>
    </subcellularLocation>
</comment>
<comment type="similarity">
    <text evidence="1">Belongs to the arrestin family.</text>
</comment>
<keyword id="KW-0963">Cytoplasm</keyword>
<keyword id="KW-0716">Sensory transduction</keyword>
<dbReference type="EMBL" id="U48412">
    <property type="protein sequence ID" value="AAB16956.1"/>
    <property type="molecule type" value="mRNA"/>
</dbReference>
<dbReference type="PIR" id="S68255">
    <property type="entry name" value="S68255"/>
</dbReference>
<dbReference type="RefSeq" id="NP_001165565.1">
    <property type="nucleotide sequence ID" value="NM_001172094.1"/>
</dbReference>
<dbReference type="SMR" id="P51468"/>
<dbReference type="Ensembl" id="ENSOMYT00000073355.2">
    <property type="protein sequence ID" value="ENSOMYP00000067345.1"/>
    <property type="gene ID" value="ENSOMYG00000031213.2"/>
</dbReference>
<dbReference type="GeneID" id="100335038"/>
<dbReference type="KEGG" id="omy:100335038"/>
<dbReference type="GeneTree" id="ENSGT00950000182887"/>
<dbReference type="OrthoDB" id="298939at2759"/>
<dbReference type="Proteomes" id="UP000694395">
    <property type="component" value="Chromosome 12"/>
</dbReference>
<dbReference type="GO" id="GO:0005737">
    <property type="term" value="C:cytoplasm"/>
    <property type="evidence" value="ECO:0007669"/>
    <property type="project" value="UniProtKB-SubCell"/>
</dbReference>
<dbReference type="GO" id="GO:0031701">
    <property type="term" value="F:angiotensin receptor binding"/>
    <property type="evidence" value="ECO:0007669"/>
    <property type="project" value="TreeGrafter"/>
</dbReference>
<dbReference type="GO" id="GO:0002031">
    <property type="term" value="P:G protein-coupled receptor internalization"/>
    <property type="evidence" value="ECO:0007669"/>
    <property type="project" value="TreeGrafter"/>
</dbReference>
<dbReference type="GO" id="GO:0007399">
    <property type="term" value="P:nervous system development"/>
    <property type="evidence" value="ECO:0007669"/>
    <property type="project" value="UniProtKB-ARBA"/>
</dbReference>
<dbReference type="GO" id="GO:0070374">
    <property type="term" value="P:positive regulation of ERK1 and ERK2 cascade"/>
    <property type="evidence" value="ECO:0007669"/>
    <property type="project" value="TreeGrafter"/>
</dbReference>
<dbReference type="GO" id="GO:0007165">
    <property type="term" value="P:signal transduction"/>
    <property type="evidence" value="ECO:0007669"/>
    <property type="project" value="InterPro"/>
</dbReference>
<dbReference type="FunFam" id="2.60.40.640:FF:000003">
    <property type="entry name" value="beta-arrestin-1 isoform X1"/>
    <property type="match status" value="1"/>
</dbReference>
<dbReference type="FunFam" id="2.60.40.840:FF:000001">
    <property type="entry name" value="beta-arrestin-1 isoform X1"/>
    <property type="match status" value="1"/>
</dbReference>
<dbReference type="Gene3D" id="2.60.40.640">
    <property type="match status" value="1"/>
</dbReference>
<dbReference type="Gene3D" id="2.60.40.840">
    <property type="match status" value="1"/>
</dbReference>
<dbReference type="InterPro" id="IPR000698">
    <property type="entry name" value="Arrestin"/>
</dbReference>
<dbReference type="InterPro" id="IPR014752">
    <property type="entry name" value="Arrestin-like_C"/>
</dbReference>
<dbReference type="InterPro" id="IPR011021">
    <property type="entry name" value="Arrestin-like_N"/>
</dbReference>
<dbReference type="InterPro" id="IPR011022">
    <property type="entry name" value="Arrestin_C-like"/>
</dbReference>
<dbReference type="InterPro" id="IPR017864">
    <property type="entry name" value="Arrestin_CS"/>
</dbReference>
<dbReference type="InterPro" id="IPR014753">
    <property type="entry name" value="Arrestin_N"/>
</dbReference>
<dbReference type="InterPro" id="IPR014756">
    <property type="entry name" value="Ig_E-set"/>
</dbReference>
<dbReference type="PANTHER" id="PTHR11792">
    <property type="entry name" value="ARRESTIN"/>
    <property type="match status" value="1"/>
</dbReference>
<dbReference type="PANTHER" id="PTHR11792:SF20">
    <property type="entry name" value="BETA-ARRESTIN-2"/>
    <property type="match status" value="1"/>
</dbReference>
<dbReference type="Pfam" id="PF02752">
    <property type="entry name" value="Arrestin_C"/>
    <property type="match status" value="1"/>
</dbReference>
<dbReference type="Pfam" id="PF00339">
    <property type="entry name" value="Arrestin_N"/>
    <property type="match status" value="1"/>
</dbReference>
<dbReference type="PRINTS" id="PR00309">
    <property type="entry name" value="ARRESTIN"/>
</dbReference>
<dbReference type="SMART" id="SM01017">
    <property type="entry name" value="Arrestin_C"/>
    <property type="match status" value="1"/>
</dbReference>
<dbReference type="SUPFAM" id="SSF81296">
    <property type="entry name" value="E set domains"/>
    <property type="match status" value="2"/>
</dbReference>
<dbReference type="PROSITE" id="PS00295">
    <property type="entry name" value="ARRESTINS"/>
    <property type="match status" value="1"/>
</dbReference>
<organism>
    <name type="scientific">Oncorhynchus mykiss</name>
    <name type="common">Rainbow trout</name>
    <name type="synonym">Salmo gairdneri</name>
    <dbReference type="NCBI Taxonomy" id="8022"/>
    <lineage>
        <taxon>Eukaryota</taxon>
        <taxon>Metazoa</taxon>
        <taxon>Chordata</taxon>
        <taxon>Craniata</taxon>
        <taxon>Vertebrata</taxon>
        <taxon>Euteleostomi</taxon>
        <taxon>Actinopterygii</taxon>
        <taxon>Neopterygii</taxon>
        <taxon>Teleostei</taxon>
        <taxon>Protacanthopterygii</taxon>
        <taxon>Salmoniformes</taxon>
        <taxon>Salmonidae</taxon>
        <taxon>Salmoninae</taxon>
        <taxon>Oncorhynchus</taxon>
    </lineage>
</organism>
<proteinExistence type="evidence at transcript level"/>
<evidence type="ECO:0000305" key="1"/>
<reference key="1">
    <citation type="journal article" date="1996" name="Biochem. J.">
        <title>Trout red blood cell arrestin (TRCarr), a novel member of the arrestin family: cloning, immunoprecipitation and expression of recombinant TRCarr.</title>
        <authorList>
            <person name="Jahns R."/>
            <person name="Borgese F."/>
            <person name="Lindenthal S."/>
            <person name="Straub A."/>
            <person name="Motais R."/>
            <person name="Fievet B."/>
        </authorList>
    </citation>
    <scope>NUCLEOTIDE SEQUENCE [MRNA]</scope>
</reference>
<protein>
    <recommendedName>
        <fullName>Arrestin red cell isoform 3</fullName>
    </recommendedName>
    <alternativeName>
        <fullName>TrCarr 3</fullName>
    </alternativeName>
</protein>